<keyword id="KW-0963">Cytoplasm</keyword>
<keyword id="KW-0324">Glycolysis</keyword>
<keyword id="KW-0520">NAD</keyword>
<keyword id="KW-0521">NADP</keyword>
<keyword id="KW-0560">Oxidoreductase</keyword>
<name>G3P_METVS</name>
<sequence length="340" mass="37553">MVGVLVNGYGSIGKRVADAVAKQDDMKVIGVTKTKPDFEARMAVTKGYKLFAAIPEKKHLFEEANIPIEGTIEDIIEDADIVVDGAPKKIGKANVENVYKKHNVKAIIQGGEKAKDAEDSFNSLWSYNRCYGKDYIRLVSCNTTGLCRTLYAIDSITDILKARVVLVRRAADPNDIKTGPINAIIPDPVTVPSHHGPDVVSVIPKLDGKIMTSAIIVPTTLMHMHSLMVETTGVTKDAVLDAIEKTPRIIKVKASEGIDSTAKIIEYSRDLGRLRYDLNEIAIWEESINVVDNEIYLMQAIHQESDVIPENIDCIRAMLEMEEDNIKSIEKTNRALGLLK</sequence>
<accession>A6URW1</accession>
<feature type="chain" id="PRO_1000061119" description="Glyceraldehyde-3-phosphate dehydrogenase">
    <location>
        <begin position="1"/>
        <end position="340"/>
    </location>
</feature>
<feature type="active site" description="Nucleophile" evidence="1">
    <location>
        <position position="141"/>
    </location>
</feature>
<feature type="binding site" evidence="1">
    <location>
        <begin position="11"/>
        <end position="12"/>
    </location>
    <ligand>
        <name>NAD(+)</name>
        <dbReference type="ChEBI" id="CHEBI:57540"/>
    </ligand>
</feature>
<feature type="binding site" evidence="1">
    <location>
        <position position="111"/>
    </location>
    <ligand>
        <name>NAD(+)</name>
        <dbReference type="ChEBI" id="CHEBI:57540"/>
    </ligand>
</feature>
<feature type="binding site" evidence="1">
    <location>
        <begin position="140"/>
        <end position="142"/>
    </location>
    <ligand>
        <name>D-glyceraldehyde 3-phosphate</name>
        <dbReference type="ChEBI" id="CHEBI:59776"/>
    </ligand>
</feature>
<feature type="binding site" evidence="1">
    <location>
        <position position="169"/>
    </location>
    <ligand>
        <name>NAD(+)</name>
        <dbReference type="ChEBI" id="CHEBI:57540"/>
    </ligand>
</feature>
<feature type="binding site" evidence="1">
    <location>
        <begin position="195"/>
        <end position="196"/>
    </location>
    <ligand>
        <name>D-glyceraldehyde 3-phosphate</name>
        <dbReference type="ChEBI" id="CHEBI:59776"/>
    </ligand>
</feature>
<feature type="binding site" evidence="1">
    <location>
        <position position="303"/>
    </location>
    <ligand>
        <name>NAD(+)</name>
        <dbReference type="ChEBI" id="CHEBI:57540"/>
    </ligand>
</feature>
<proteinExistence type="inferred from homology"/>
<comment type="catalytic activity">
    <reaction evidence="1">
        <text>D-glyceraldehyde 3-phosphate + phosphate + NADP(+) = (2R)-3-phospho-glyceroyl phosphate + NADPH + H(+)</text>
        <dbReference type="Rhea" id="RHEA:10296"/>
        <dbReference type="ChEBI" id="CHEBI:15378"/>
        <dbReference type="ChEBI" id="CHEBI:43474"/>
        <dbReference type="ChEBI" id="CHEBI:57604"/>
        <dbReference type="ChEBI" id="CHEBI:57783"/>
        <dbReference type="ChEBI" id="CHEBI:58349"/>
        <dbReference type="ChEBI" id="CHEBI:59776"/>
        <dbReference type="EC" id="1.2.1.59"/>
    </reaction>
</comment>
<comment type="catalytic activity">
    <reaction evidence="1">
        <text>D-glyceraldehyde 3-phosphate + phosphate + NAD(+) = (2R)-3-phospho-glyceroyl phosphate + NADH + H(+)</text>
        <dbReference type="Rhea" id="RHEA:10300"/>
        <dbReference type="ChEBI" id="CHEBI:15378"/>
        <dbReference type="ChEBI" id="CHEBI:43474"/>
        <dbReference type="ChEBI" id="CHEBI:57540"/>
        <dbReference type="ChEBI" id="CHEBI:57604"/>
        <dbReference type="ChEBI" id="CHEBI:57945"/>
        <dbReference type="ChEBI" id="CHEBI:59776"/>
        <dbReference type="EC" id="1.2.1.59"/>
    </reaction>
</comment>
<comment type="pathway">
    <text evidence="1">Carbohydrate degradation; glycolysis; pyruvate from D-glyceraldehyde 3-phosphate: step 1/5.</text>
</comment>
<comment type="subunit">
    <text evidence="1">Homotetramer.</text>
</comment>
<comment type="subcellular location">
    <subcellularLocation>
        <location evidence="1">Cytoplasm</location>
    </subcellularLocation>
</comment>
<comment type="similarity">
    <text evidence="1">Belongs to the glyceraldehyde-3-phosphate dehydrogenase family.</text>
</comment>
<reference key="1">
    <citation type="submission" date="2007-06" db="EMBL/GenBank/DDBJ databases">
        <title>Complete sequence of Methanococcus vannielii SB.</title>
        <authorList>
            <consortium name="US DOE Joint Genome Institute"/>
            <person name="Copeland A."/>
            <person name="Lucas S."/>
            <person name="Lapidus A."/>
            <person name="Barry K."/>
            <person name="Glavina del Rio T."/>
            <person name="Dalin E."/>
            <person name="Tice H."/>
            <person name="Pitluck S."/>
            <person name="Chain P."/>
            <person name="Malfatti S."/>
            <person name="Shin M."/>
            <person name="Vergez L."/>
            <person name="Schmutz J."/>
            <person name="Larimer F."/>
            <person name="Land M."/>
            <person name="Hauser L."/>
            <person name="Kyrpides N."/>
            <person name="Anderson I."/>
            <person name="Sieprawska-Lupa M."/>
            <person name="Whitman W.B."/>
            <person name="Richardson P."/>
        </authorList>
    </citation>
    <scope>NUCLEOTIDE SEQUENCE [LARGE SCALE GENOMIC DNA]</scope>
    <source>
        <strain>ATCC 35089 / DSM 1224 / JCM 13029 / OCM 148 / SB</strain>
    </source>
</reference>
<gene>
    <name evidence="1" type="primary">gap</name>
    <name type="ordered locus">Mevan_1336</name>
</gene>
<dbReference type="EC" id="1.2.1.59" evidence="1"/>
<dbReference type="EMBL" id="CP000742">
    <property type="protein sequence ID" value="ABR55233.1"/>
    <property type="molecule type" value="Genomic_DNA"/>
</dbReference>
<dbReference type="RefSeq" id="WP_012066148.1">
    <property type="nucleotide sequence ID" value="NC_009634.1"/>
</dbReference>
<dbReference type="SMR" id="A6URW1"/>
<dbReference type="STRING" id="406327.Mevan_1336"/>
<dbReference type="GeneID" id="5324771"/>
<dbReference type="KEGG" id="mvn:Mevan_1336"/>
<dbReference type="eggNOG" id="arCOG00493">
    <property type="taxonomic scope" value="Archaea"/>
</dbReference>
<dbReference type="HOGENOM" id="CLU_069533_0_0_2"/>
<dbReference type="OrthoDB" id="295712at2157"/>
<dbReference type="UniPathway" id="UPA00109">
    <property type="reaction ID" value="UER00184"/>
</dbReference>
<dbReference type="Proteomes" id="UP000001107">
    <property type="component" value="Chromosome"/>
</dbReference>
<dbReference type="GO" id="GO:0005737">
    <property type="term" value="C:cytoplasm"/>
    <property type="evidence" value="ECO:0007669"/>
    <property type="project" value="UniProtKB-SubCell"/>
</dbReference>
<dbReference type="GO" id="GO:0004365">
    <property type="term" value="F:glyceraldehyde-3-phosphate dehydrogenase (NAD+) (phosphorylating) activity"/>
    <property type="evidence" value="ECO:0007669"/>
    <property type="project" value="UniProtKB-UniRule"/>
</dbReference>
<dbReference type="GO" id="GO:0047100">
    <property type="term" value="F:glyceraldehyde-3-phosphate dehydrogenase (NADP+) (phosphorylating) activity"/>
    <property type="evidence" value="ECO:0007669"/>
    <property type="project" value="RHEA"/>
</dbReference>
<dbReference type="GO" id="GO:0051287">
    <property type="term" value="F:NAD binding"/>
    <property type="evidence" value="ECO:0007669"/>
    <property type="project" value="InterPro"/>
</dbReference>
<dbReference type="GO" id="GO:0050661">
    <property type="term" value="F:NADP binding"/>
    <property type="evidence" value="ECO:0007669"/>
    <property type="project" value="InterPro"/>
</dbReference>
<dbReference type="GO" id="GO:0006096">
    <property type="term" value="P:glycolytic process"/>
    <property type="evidence" value="ECO:0007669"/>
    <property type="project" value="UniProtKB-UniRule"/>
</dbReference>
<dbReference type="CDD" id="cd18127">
    <property type="entry name" value="GAPDH_II_C"/>
    <property type="match status" value="1"/>
</dbReference>
<dbReference type="CDD" id="cd02278">
    <property type="entry name" value="GAPDH_II_N"/>
    <property type="match status" value="1"/>
</dbReference>
<dbReference type="Gene3D" id="3.30.360.10">
    <property type="entry name" value="Dihydrodipicolinate Reductase, domain 2"/>
    <property type="match status" value="1"/>
</dbReference>
<dbReference type="Gene3D" id="3.40.50.720">
    <property type="entry name" value="NAD(P)-binding Rossmann-like Domain"/>
    <property type="match status" value="1"/>
</dbReference>
<dbReference type="HAMAP" id="MF_00559">
    <property type="entry name" value="G3P_dehdrog_arch"/>
    <property type="match status" value="1"/>
</dbReference>
<dbReference type="InterPro" id="IPR020831">
    <property type="entry name" value="GlycerAld/Erythrose_P_DH"/>
</dbReference>
<dbReference type="InterPro" id="IPR020830">
    <property type="entry name" value="GlycerAld_3-P_DH_AS"/>
</dbReference>
<dbReference type="InterPro" id="IPR020829">
    <property type="entry name" value="GlycerAld_3-P_DH_cat"/>
</dbReference>
<dbReference type="InterPro" id="IPR020828">
    <property type="entry name" value="GlycerAld_3-P_DH_NAD(P)-bd"/>
</dbReference>
<dbReference type="InterPro" id="IPR006436">
    <property type="entry name" value="Glyceraldehyde-3-P_DH_2_arc"/>
</dbReference>
<dbReference type="InterPro" id="IPR036291">
    <property type="entry name" value="NAD(P)-bd_dom_sf"/>
</dbReference>
<dbReference type="NCBIfam" id="TIGR01546">
    <property type="entry name" value="GAPDH-II_archae"/>
    <property type="match status" value="1"/>
</dbReference>
<dbReference type="NCBIfam" id="NF003251">
    <property type="entry name" value="PRK04207.1"/>
    <property type="match status" value="1"/>
</dbReference>
<dbReference type="Pfam" id="PF02800">
    <property type="entry name" value="Gp_dh_C"/>
    <property type="match status" value="1"/>
</dbReference>
<dbReference type="PIRSF" id="PIRSF000149">
    <property type="entry name" value="GAP_DH"/>
    <property type="match status" value="1"/>
</dbReference>
<dbReference type="SMART" id="SM00846">
    <property type="entry name" value="Gp_dh_N"/>
    <property type="match status" value="1"/>
</dbReference>
<dbReference type="SUPFAM" id="SSF55347">
    <property type="entry name" value="Glyceraldehyde-3-phosphate dehydrogenase-like, C-terminal domain"/>
    <property type="match status" value="1"/>
</dbReference>
<dbReference type="SUPFAM" id="SSF51735">
    <property type="entry name" value="NAD(P)-binding Rossmann-fold domains"/>
    <property type="match status" value="1"/>
</dbReference>
<dbReference type="PROSITE" id="PS00071">
    <property type="entry name" value="GAPDH"/>
    <property type="match status" value="1"/>
</dbReference>
<evidence type="ECO:0000255" key="1">
    <source>
        <dbReference type="HAMAP-Rule" id="MF_00559"/>
    </source>
</evidence>
<protein>
    <recommendedName>
        <fullName evidence="1">Glyceraldehyde-3-phosphate dehydrogenase</fullName>
        <shortName evidence="1">GAPDH</shortName>
        <ecNumber evidence="1">1.2.1.59</ecNumber>
    </recommendedName>
    <alternativeName>
        <fullName evidence="1">NAD(P)-dependent glyceraldehyde-3-phosphate dehydrogenase</fullName>
    </alternativeName>
</protein>
<organism>
    <name type="scientific">Methanococcus vannielii (strain ATCC 35089 / DSM 1224 / JCM 13029 / OCM 148 / SB)</name>
    <dbReference type="NCBI Taxonomy" id="406327"/>
    <lineage>
        <taxon>Archaea</taxon>
        <taxon>Methanobacteriati</taxon>
        <taxon>Methanobacteriota</taxon>
        <taxon>Methanomada group</taxon>
        <taxon>Methanococci</taxon>
        <taxon>Methanococcales</taxon>
        <taxon>Methanococcaceae</taxon>
        <taxon>Methanococcus</taxon>
    </lineage>
</organism>